<sequence length="379" mass="42665">MTNIRKTHPLLKIVNNAFIDLPAPSNISSWWNFGSLLGICLILQILTGLFLAMHYTADTTTAFSSVTHICRDVNYGWIIRYMHANGASMFFICLFMHVGRGLYYGSYAYTETWNIGVILLFATMATAFMGYVLPWGQMSFWGATVITNLLSAIPYIGTNLVEWIWGGFSVDKATLTRFFAFHFIFPFIIAALAMVHLLFLHETGSNNPTGISSDADKIPFHPYYTIKDILGVLLLILALMTLVLFSPDLLGDPDNYPPANPLNTPPHIKPEWYFLFAYAILRSIPNKLGGVLALVLSILILILMPLLHTSKQRSMMFRPISQCLFWILVADLLTLTWIGGQPVEHPYIIIGQLASIMYFLLILVLMPTASTIENNLLKW</sequence>
<keyword id="KW-0249">Electron transport</keyword>
<keyword id="KW-0349">Heme</keyword>
<keyword id="KW-0408">Iron</keyword>
<keyword id="KW-0472">Membrane</keyword>
<keyword id="KW-0479">Metal-binding</keyword>
<keyword id="KW-0496">Mitochondrion</keyword>
<keyword id="KW-0999">Mitochondrion inner membrane</keyword>
<keyword id="KW-0679">Respiratory chain</keyword>
<keyword id="KW-0812">Transmembrane</keyword>
<keyword id="KW-1133">Transmembrane helix</keyword>
<keyword id="KW-0813">Transport</keyword>
<keyword id="KW-0830">Ubiquinone</keyword>
<organism>
    <name type="scientific">Sylvicapra grimmia</name>
    <name type="common">Grey duiker</name>
    <dbReference type="NCBI Taxonomy" id="119562"/>
    <lineage>
        <taxon>Eukaryota</taxon>
        <taxon>Metazoa</taxon>
        <taxon>Chordata</taxon>
        <taxon>Craniata</taxon>
        <taxon>Vertebrata</taxon>
        <taxon>Euteleostomi</taxon>
        <taxon>Mammalia</taxon>
        <taxon>Eutheria</taxon>
        <taxon>Laurasiatheria</taxon>
        <taxon>Artiodactyla</taxon>
        <taxon>Ruminantia</taxon>
        <taxon>Pecora</taxon>
        <taxon>Bovidae</taxon>
        <taxon>Cephalophinae</taxon>
        <taxon>Sylvicapra</taxon>
    </lineage>
</organism>
<evidence type="ECO:0000250" key="1"/>
<evidence type="ECO:0000250" key="2">
    <source>
        <dbReference type="UniProtKB" id="P00157"/>
    </source>
</evidence>
<evidence type="ECO:0000255" key="3">
    <source>
        <dbReference type="PROSITE-ProRule" id="PRU00967"/>
    </source>
</evidence>
<evidence type="ECO:0000255" key="4">
    <source>
        <dbReference type="PROSITE-ProRule" id="PRU00968"/>
    </source>
</evidence>
<accession>Q9B5Q1</accession>
<accession>Q9B5Q2</accession>
<gene>
    <name type="primary">MT-CYB</name>
    <name type="synonym">COB</name>
    <name type="synonym">CYTB</name>
    <name type="synonym">MTCYB</name>
</gene>
<comment type="function">
    <text evidence="2">Component of the ubiquinol-cytochrome c reductase complex (complex III or cytochrome b-c1 complex) that is part of the mitochondrial respiratory chain. The b-c1 complex mediates electron transfer from ubiquinol to cytochrome c. Contributes to the generation of a proton gradient across the mitochondrial membrane that is then used for ATP synthesis.</text>
</comment>
<comment type="cofactor">
    <cofactor evidence="2">
        <name>heme b</name>
        <dbReference type="ChEBI" id="CHEBI:60344"/>
    </cofactor>
    <text evidence="2">Binds 2 heme b groups non-covalently.</text>
</comment>
<comment type="subunit">
    <text evidence="2">The cytochrome bc1 complex contains 11 subunits: 3 respiratory subunits (MT-CYB, CYC1 and UQCRFS1), 2 core proteins (UQCRC1 and UQCRC2) and 6 low-molecular weight proteins (UQCRH/QCR6, UQCRB/QCR7, UQCRQ/QCR8, UQCR10/QCR9, UQCR11/QCR10 and a cleavage product of UQCRFS1). This cytochrome bc1 complex then forms a dimer.</text>
</comment>
<comment type="subcellular location">
    <subcellularLocation>
        <location evidence="2">Mitochondrion inner membrane</location>
        <topology evidence="2">Multi-pass membrane protein</topology>
    </subcellularLocation>
</comment>
<comment type="miscellaneous">
    <text evidence="1">Heme 1 (or BL or b562) is low-potential and absorbs at about 562 nm, and heme 2 (or BH or b566) is high-potential and absorbs at about 566 nm.</text>
</comment>
<comment type="similarity">
    <text evidence="3 4">Belongs to the cytochrome b family.</text>
</comment>
<comment type="caution">
    <text evidence="2">The full-length protein contains only eight transmembrane helices, not nine as predicted by bioinformatics tools.</text>
</comment>
<feature type="chain" id="PRO_0000061626" description="Cytochrome b">
    <location>
        <begin position="1"/>
        <end position="379"/>
    </location>
</feature>
<feature type="transmembrane region" description="Helical" evidence="2">
    <location>
        <begin position="33"/>
        <end position="53"/>
    </location>
</feature>
<feature type="transmembrane region" description="Helical" evidence="2">
    <location>
        <begin position="77"/>
        <end position="98"/>
    </location>
</feature>
<feature type="transmembrane region" description="Helical" evidence="2">
    <location>
        <begin position="113"/>
        <end position="133"/>
    </location>
</feature>
<feature type="transmembrane region" description="Helical" evidence="2">
    <location>
        <begin position="178"/>
        <end position="198"/>
    </location>
</feature>
<feature type="transmembrane region" description="Helical" evidence="2">
    <location>
        <begin position="226"/>
        <end position="246"/>
    </location>
</feature>
<feature type="transmembrane region" description="Helical" evidence="2">
    <location>
        <begin position="288"/>
        <end position="308"/>
    </location>
</feature>
<feature type="transmembrane region" description="Helical" evidence="2">
    <location>
        <begin position="320"/>
        <end position="340"/>
    </location>
</feature>
<feature type="transmembrane region" description="Helical" evidence="2">
    <location>
        <begin position="347"/>
        <end position="367"/>
    </location>
</feature>
<feature type="binding site" description="axial binding residue" evidence="2">
    <location>
        <position position="83"/>
    </location>
    <ligand>
        <name>heme b</name>
        <dbReference type="ChEBI" id="CHEBI:60344"/>
        <label>b562</label>
    </ligand>
    <ligandPart>
        <name>Fe</name>
        <dbReference type="ChEBI" id="CHEBI:18248"/>
    </ligandPart>
</feature>
<feature type="binding site" description="axial binding residue" evidence="2">
    <location>
        <position position="97"/>
    </location>
    <ligand>
        <name>heme b</name>
        <dbReference type="ChEBI" id="CHEBI:60344"/>
        <label>b566</label>
    </ligand>
    <ligandPart>
        <name>Fe</name>
        <dbReference type="ChEBI" id="CHEBI:18248"/>
    </ligandPart>
</feature>
<feature type="binding site" description="axial binding residue" evidence="2">
    <location>
        <position position="182"/>
    </location>
    <ligand>
        <name>heme b</name>
        <dbReference type="ChEBI" id="CHEBI:60344"/>
        <label>b562</label>
    </ligand>
    <ligandPart>
        <name>Fe</name>
        <dbReference type="ChEBI" id="CHEBI:18248"/>
    </ligandPart>
</feature>
<feature type="binding site" description="axial binding residue" evidence="2">
    <location>
        <position position="196"/>
    </location>
    <ligand>
        <name>heme b</name>
        <dbReference type="ChEBI" id="CHEBI:60344"/>
        <label>b566</label>
    </ligand>
    <ligandPart>
        <name>Fe</name>
        <dbReference type="ChEBI" id="CHEBI:18248"/>
    </ligandPart>
</feature>
<feature type="binding site" evidence="2">
    <location>
        <position position="201"/>
    </location>
    <ligand>
        <name>a ubiquinone</name>
        <dbReference type="ChEBI" id="CHEBI:16389"/>
    </ligand>
</feature>
<feature type="sequence variant">
    <original>R</original>
    <variation>Q</variation>
    <location>
        <position position="5"/>
    </location>
</feature>
<feature type="sequence variant">
    <original>V</original>
    <variation>E</variation>
    <location>
        <position position="14"/>
    </location>
</feature>
<feature type="sequence variant">
    <original>T</original>
    <variation>M</variation>
    <location>
        <position position="110"/>
    </location>
</feature>
<feature type="sequence variant">
    <original>V</original>
    <variation>A</variation>
    <location>
        <position position="232"/>
    </location>
</feature>
<proteinExistence type="inferred from homology"/>
<geneLocation type="mitochondrion"/>
<protein>
    <recommendedName>
        <fullName>Cytochrome b</fullName>
    </recommendedName>
    <alternativeName>
        <fullName>Complex III subunit 3</fullName>
    </alternativeName>
    <alternativeName>
        <fullName>Complex III subunit III</fullName>
    </alternativeName>
    <alternativeName>
        <fullName>Cytochrome b-c1 complex subunit 3</fullName>
    </alternativeName>
    <alternativeName>
        <fullName>Ubiquinol-cytochrome-c reductase complex cytochrome b subunit</fullName>
    </alternativeName>
</protein>
<dbReference type="EMBL" id="AF153904">
    <property type="protein sequence ID" value="AAK26692.1"/>
    <property type="molecule type" value="Genomic_DNA"/>
</dbReference>
<dbReference type="EMBL" id="AF153905">
    <property type="protein sequence ID" value="AAK26693.1"/>
    <property type="molecule type" value="Genomic_DNA"/>
</dbReference>
<dbReference type="SMR" id="Q9B5Q1"/>
<dbReference type="GO" id="GO:0005743">
    <property type="term" value="C:mitochondrial inner membrane"/>
    <property type="evidence" value="ECO:0007669"/>
    <property type="project" value="UniProtKB-SubCell"/>
</dbReference>
<dbReference type="GO" id="GO:0045275">
    <property type="term" value="C:respiratory chain complex III"/>
    <property type="evidence" value="ECO:0007669"/>
    <property type="project" value="InterPro"/>
</dbReference>
<dbReference type="GO" id="GO:0046872">
    <property type="term" value="F:metal ion binding"/>
    <property type="evidence" value="ECO:0007669"/>
    <property type="project" value="UniProtKB-KW"/>
</dbReference>
<dbReference type="GO" id="GO:0008121">
    <property type="term" value="F:ubiquinol-cytochrome-c reductase activity"/>
    <property type="evidence" value="ECO:0007669"/>
    <property type="project" value="InterPro"/>
</dbReference>
<dbReference type="GO" id="GO:0006122">
    <property type="term" value="P:mitochondrial electron transport, ubiquinol to cytochrome c"/>
    <property type="evidence" value="ECO:0007669"/>
    <property type="project" value="TreeGrafter"/>
</dbReference>
<dbReference type="CDD" id="cd00290">
    <property type="entry name" value="cytochrome_b_C"/>
    <property type="match status" value="1"/>
</dbReference>
<dbReference type="CDD" id="cd00284">
    <property type="entry name" value="Cytochrome_b_N"/>
    <property type="match status" value="1"/>
</dbReference>
<dbReference type="FunFam" id="1.20.810.10:FF:000002">
    <property type="entry name" value="Cytochrome b"/>
    <property type="match status" value="1"/>
</dbReference>
<dbReference type="Gene3D" id="1.20.810.10">
    <property type="entry name" value="Cytochrome Bc1 Complex, Chain C"/>
    <property type="match status" value="1"/>
</dbReference>
<dbReference type="InterPro" id="IPR005798">
    <property type="entry name" value="Cyt_b/b6_C"/>
</dbReference>
<dbReference type="InterPro" id="IPR036150">
    <property type="entry name" value="Cyt_b/b6_C_sf"/>
</dbReference>
<dbReference type="InterPro" id="IPR005797">
    <property type="entry name" value="Cyt_b/b6_N"/>
</dbReference>
<dbReference type="InterPro" id="IPR027387">
    <property type="entry name" value="Cytb/b6-like_sf"/>
</dbReference>
<dbReference type="InterPro" id="IPR030689">
    <property type="entry name" value="Cytochrome_b"/>
</dbReference>
<dbReference type="InterPro" id="IPR048260">
    <property type="entry name" value="Cytochrome_b_C_euk/bac"/>
</dbReference>
<dbReference type="InterPro" id="IPR048259">
    <property type="entry name" value="Cytochrome_b_N_euk/bac"/>
</dbReference>
<dbReference type="InterPro" id="IPR016174">
    <property type="entry name" value="Di-haem_cyt_TM"/>
</dbReference>
<dbReference type="PANTHER" id="PTHR19271">
    <property type="entry name" value="CYTOCHROME B"/>
    <property type="match status" value="1"/>
</dbReference>
<dbReference type="PANTHER" id="PTHR19271:SF16">
    <property type="entry name" value="CYTOCHROME B"/>
    <property type="match status" value="1"/>
</dbReference>
<dbReference type="Pfam" id="PF00032">
    <property type="entry name" value="Cytochrom_B_C"/>
    <property type="match status" value="1"/>
</dbReference>
<dbReference type="Pfam" id="PF00033">
    <property type="entry name" value="Cytochrome_B"/>
    <property type="match status" value="1"/>
</dbReference>
<dbReference type="PIRSF" id="PIRSF038885">
    <property type="entry name" value="COB"/>
    <property type="match status" value="1"/>
</dbReference>
<dbReference type="SUPFAM" id="SSF81648">
    <property type="entry name" value="a domain/subunit of cytochrome bc1 complex (Ubiquinol-cytochrome c reductase)"/>
    <property type="match status" value="1"/>
</dbReference>
<dbReference type="SUPFAM" id="SSF81342">
    <property type="entry name" value="Transmembrane di-heme cytochromes"/>
    <property type="match status" value="1"/>
</dbReference>
<dbReference type="PROSITE" id="PS51003">
    <property type="entry name" value="CYTB_CTER"/>
    <property type="match status" value="1"/>
</dbReference>
<dbReference type="PROSITE" id="PS51002">
    <property type="entry name" value="CYTB_NTER"/>
    <property type="match status" value="1"/>
</dbReference>
<name>CYB_SYLGR</name>
<reference key="1">
    <citation type="journal article" date="2001" name="Mol. Phylogenet. Evol.">
        <title>Retrieval of four adaptive lineages in duiker antelope: evidence from mitochondrial DNA sequences and fluorescence in situ hybridization.</title>
        <authorList>
            <person name="van Vuuren B.J."/>
            <person name="Robinson T.J."/>
        </authorList>
    </citation>
    <scope>NUCLEOTIDE SEQUENCE [GENOMIC DNA]</scope>
</reference>